<sequence length="144" mass="16066">MAYKHILIAVDLSPESKVLVEKAVSMARPYNAKVSLIHVDVNYSDLYTGLIDVNLGDMQKRISEETHHALTELSTNAGYPITETLSGSGDLGQVLVDAIKKYDMDLVVCGHHQDFWSKLMSSARQLINTVHVDMLIVPLRDEEE</sequence>
<gene>
    <name type="primary">uspA</name>
</gene>
<protein>
    <recommendedName>
        <fullName>Universal stress protein A</fullName>
    </recommendedName>
</protein>
<proteinExistence type="inferred from homology"/>
<organism>
    <name type="scientific">Shigella sonnei</name>
    <dbReference type="NCBI Taxonomy" id="624"/>
    <lineage>
        <taxon>Bacteria</taxon>
        <taxon>Pseudomonadati</taxon>
        <taxon>Pseudomonadota</taxon>
        <taxon>Gammaproteobacteria</taxon>
        <taxon>Enterobacterales</taxon>
        <taxon>Enterobacteriaceae</taxon>
        <taxon>Shigella</taxon>
    </lineage>
</organism>
<dbReference type="EMBL" id="AF346732">
    <property type="protein sequence ID" value="AAK30575.1"/>
    <property type="molecule type" value="Genomic_DNA"/>
</dbReference>
<dbReference type="RefSeq" id="WP_000323571.1">
    <property type="nucleotide sequence ID" value="NZ_WHSK01000008.1"/>
</dbReference>
<dbReference type="SMR" id="P0AED4"/>
<dbReference type="STRING" id="216599.GCA_000283715_04067"/>
<dbReference type="GeneID" id="93778498"/>
<dbReference type="OMA" id="MNTVPCD"/>
<dbReference type="GO" id="GO:0005737">
    <property type="term" value="C:cytoplasm"/>
    <property type="evidence" value="ECO:0007669"/>
    <property type="project" value="UniProtKB-SubCell"/>
</dbReference>
<dbReference type="CDD" id="cd23657">
    <property type="entry name" value="USP-A-like"/>
    <property type="match status" value="1"/>
</dbReference>
<dbReference type="FunFam" id="3.40.50.620:FF:000014">
    <property type="entry name" value="Universal stress protein"/>
    <property type="match status" value="1"/>
</dbReference>
<dbReference type="Gene3D" id="3.40.50.620">
    <property type="entry name" value="HUPs"/>
    <property type="match status" value="1"/>
</dbReference>
<dbReference type="InterPro" id="IPR014729">
    <property type="entry name" value="Rossmann-like_a/b/a_fold"/>
</dbReference>
<dbReference type="InterPro" id="IPR006015">
    <property type="entry name" value="Universal_stress_UspA"/>
</dbReference>
<dbReference type="InterPro" id="IPR006016">
    <property type="entry name" value="UspA"/>
</dbReference>
<dbReference type="NCBIfam" id="NF011698">
    <property type="entry name" value="PRK15118.1"/>
    <property type="match status" value="1"/>
</dbReference>
<dbReference type="PANTHER" id="PTHR46268">
    <property type="entry name" value="STRESS RESPONSE PROTEIN NHAX"/>
    <property type="match status" value="1"/>
</dbReference>
<dbReference type="PANTHER" id="PTHR46268:SF23">
    <property type="entry name" value="UNIVERSAL STRESS PROTEIN A-RELATED"/>
    <property type="match status" value="1"/>
</dbReference>
<dbReference type="Pfam" id="PF00582">
    <property type="entry name" value="Usp"/>
    <property type="match status" value="1"/>
</dbReference>
<dbReference type="PIRSF" id="PIRSF006276">
    <property type="entry name" value="UspA"/>
    <property type="match status" value="1"/>
</dbReference>
<dbReference type="SUPFAM" id="SSF52402">
    <property type="entry name" value="Adenine nucleotide alpha hydrolases-like"/>
    <property type="match status" value="1"/>
</dbReference>
<reference key="1">
    <citation type="submission" date="2001-02" db="EMBL/GenBank/DDBJ databases">
        <title>Comparative study of nucleotide sequences of uspA of Escherichia coli K-12, Escherichia coli O157:H7 and Shigella sonnei.</title>
        <authorList>
            <person name="Chen J."/>
        </authorList>
    </citation>
    <scope>NUCLEOTIDE SEQUENCE [GENOMIC DNA]</scope>
</reference>
<accession>P0AED4</accession>
<accession>P28242</accession>
<feature type="initiator methionine" description="Removed" evidence="1">
    <location>
        <position position="1"/>
    </location>
</feature>
<feature type="chain" id="PRO_0000147406" description="Universal stress protein A">
    <location>
        <begin position="2"/>
        <end position="144"/>
    </location>
</feature>
<keyword id="KW-0963">Cytoplasm</keyword>
<keyword id="KW-0597">Phosphoprotein</keyword>
<name>USPA_SHISO</name>
<evidence type="ECO:0000250" key="1"/>
<evidence type="ECO:0000305" key="2"/>
<comment type="function">
    <text evidence="1">Required for resistance to DNA-damaging agents.</text>
</comment>
<comment type="subunit">
    <text evidence="1">Homodimer.</text>
</comment>
<comment type="subcellular location">
    <subcellularLocation>
        <location evidence="1">Cytoplasm</location>
    </subcellularLocation>
</comment>
<comment type="similarity">
    <text evidence="2">Belongs to the universal stress protein A family.</text>
</comment>